<sequence length="112" mass="13249">MANIHQENEEMEQPVQNGEEDRPLGGGEGHQPERNHRRGQARRLAPNFRWVIPNRQVNDGMGGEGDDMEIFMEEMREIRRKLRELQLRNCLRILMGELSNHHDHHDEFCLMP</sequence>
<comment type="function">
    <text evidence="2">May be a signaling adapter molecule involved in NGFR/p75NTR-mediated apoptosis induced by NGF. Plays a role in zinc-triggered neuronal death. In absence of reductive stress, acts as a pseudosubstrate for the CRL2(FEM1B) complex: associates with FEM1B via zinc, thereby preventing association between FEM1B and its substrates.</text>
</comment>
<comment type="subunit">
    <text evidence="2">Self-associates. Binds to the DEATH domain of p75NTR/NGFR. Interacts with 14-3-3 epsilon (YWHAE). Interacts with DIABLO/SMAC.</text>
</comment>
<comment type="subcellular location">
    <subcellularLocation>
        <location evidence="2">Nucleus</location>
    </subcellularLocation>
    <subcellularLocation>
        <location evidence="2">Cytoplasm</location>
        <location evidence="2">Cytosol</location>
    </subcellularLocation>
    <text evidence="2">Shuttles between the cytoplasm and the nucleus. Associates with replicating mitochondria.</text>
</comment>
<comment type="domain">
    <text evidence="2">The nuclear export signal is required for export from the nucleus and the interactions with itself and NGFR/p75NTR.</text>
</comment>
<comment type="domain">
    <text evidence="2">The histidine cluster (His cluster) and Cys-109 mediate zinc-binding.</text>
</comment>
<comment type="PTM">
    <text evidence="2">Ubiquitinated. Degraded by the proteasome.</text>
</comment>
<comment type="similarity">
    <text evidence="4">Belongs to the BEX family.</text>
</comment>
<organism>
    <name type="scientific">Bos taurus</name>
    <name type="common">Bovine</name>
    <dbReference type="NCBI Taxonomy" id="9913"/>
    <lineage>
        <taxon>Eukaryota</taxon>
        <taxon>Metazoa</taxon>
        <taxon>Chordata</taxon>
        <taxon>Craniata</taxon>
        <taxon>Vertebrata</taxon>
        <taxon>Euteleostomi</taxon>
        <taxon>Mammalia</taxon>
        <taxon>Eutheria</taxon>
        <taxon>Laurasiatheria</taxon>
        <taxon>Artiodactyla</taxon>
        <taxon>Ruminantia</taxon>
        <taxon>Pecora</taxon>
        <taxon>Bovidae</taxon>
        <taxon>Bovinae</taxon>
        <taxon>Bos</taxon>
    </lineage>
</organism>
<gene>
    <name evidence="1" type="primary">BEX3</name>
    <name type="synonym">NADE</name>
    <name type="synonym">NGFRAP1</name>
</gene>
<proteinExistence type="inferred from homology"/>
<evidence type="ECO:0000250" key="1">
    <source>
        <dbReference type="UniProtKB" id="Q00994"/>
    </source>
</evidence>
<evidence type="ECO:0000250" key="2">
    <source>
        <dbReference type="UniProtKB" id="Q9WTZ9"/>
    </source>
</evidence>
<evidence type="ECO:0000256" key="3">
    <source>
        <dbReference type="SAM" id="MobiDB-lite"/>
    </source>
</evidence>
<evidence type="ECO:0000305" key="4"/>
<accession>Q3ZBJ6</accession>
<protein>
    <recommendedName>
        <fullName evidence="4">Protein BEX3</fullName>
    </recommendedName>
    <alternativeName>
        <fullName evidence="1">Brain-expressed X-linked protein 3 homolog</fullName>
    </alternativeName>
    <alternativeName>
        <fullName>Nerve growth factor receptor-associated protein 1</fullName>
    </alternativeName>
    <alternativeName>
        <fullName>p75NTR-associated cell death executor</fullName>
    </alternativeName>
</protein>
<keyword id="KW-0053">Apoptosis</keyword>
<keyword id="KW-0963">Cytoplasm</keyword>
<keyword id="KW-0479">Metal-binding</keyword>
<keyword id="KW-0539">Nucleus</keyword>
<keyword id="KW-1185">Reference proteome</keyword>
<keyword id="KW-0832">Ubl conjugation</keyword>
<keyword id="KW-0862">Zinc</keyword>
<reference key="1">
    <citation type="submission" date="2005-08" db="EMBL/GenBank/DDBJ databases">
        <authorList>
            <consortium name="NIH - Mammalian Gene Collection (MGC) project"/>
        </authorList>
    </citation>
    <scope>NUCLEOTIDE SEQUENCE [LARGE SCALE MRNA]</scope>
    <source>
        <strain>Hereford</strain>
        <tissue>Kidney</tissue>
    </source>
</reference>
<name>BEX3_BOVIN</name>
<dbReference type="EMBL" id="BC103258">
    <property type="protein sequence ID" value="AAI03259.1"/>
    <property type="molecule type" value="mRNA"/>
</dbReference>
<dbReference type="RefSeq" id="NP_001157249.1">
    <property type="nucleotide sequence ID" value="NM_001163777.2"/>
</dbReference>
<dbReference type="RefSeq" id="XP_059739226.1">
    <property type="nucleotide sequence ID" value="XM_059883243.1"/>
</dbReference>
<dbReference type="FunCoup" id="Q3ZBJ6">
    <property type="interactions" value="381"/>
</dbReference>
<dbReference type="STRING" id="9913.ENSBTAP00000007916"/>
<dbReference type="PaxDb" id="9913-ENSBTAP00000007916"/>
<dbReference type="Ensembl" id="ENSBTAT00000007916.6">
    <property type="protein sequence ID" value="ENSBTAP00000007916.4"/>
    <property type="gene ID" value="ENSBTAG00000006026.6"/>
</dbReference>
<dbReference type="GeneID" id="100034674"/>
<dbReference type="KEGG" id="bta:100034674"/>
<dbReference type="CTD" id="27018"/>
<dbReference type="VEuPathDB" id="HostDB:ENSBTAG00000006026"/>
<dbReference type="VGNC" id="VGNC:50552">
    <property type="gene designation" value="BEX3"/>
</dbReference>
<dbReference type="eggNOG" id="ENOG502TF4N">
    <property type="taxonomic scope" value="Eukaryota"/>
</dbReference>
<dbReference type="GeneTree" id="ENSGT00940000153412"/>
<dbReference type="HOGENOM" id="CLU_123122_0_0_1"/>
<dbReference type="InParanoid" id="Q3ZBJ6"/>
<dbReference type="OMA" id="EMEQHMQ"/>
<dbReference type="OrthoDB" id="9833790at2759"/>
<dbReference type="TreeFam" id="TF337909"/>
<dbReference type="Reactome" id="R-BTA-205025">
    <property type="pathway name" value="NADE modulates death signalling"/>
</dbReference>
<dbReference type="Proteomes" id="UP000009136">
    <property type="component" value="Chromosome X"/>
</dbReference>
<dbReference type="Bgee" id="ENSBTAG00000006026">
    <property type="expression patterns" value="Expressed in Ammon's horn and 105 other cell types or tissues"/>
</dbReference>
<dbReference type="GO" id="GO:0005737">
    <property type="term" value="C:cytoplasm"/>
    <property type="evidence" value="ECO:0000318"/>
    <property type="project" value="GO_Central"/>
</dbReference>
<dbReference type="GO" id="GO:0005829">
    <property type="term" value="C:cytosol"/>
    <property type="evidence" value="ECO:0000318"/>
    <property type="project" value="GO_Central"/>
</dbReference>
<dbReference type="GO" id="GO:0005634">
    <property type="term" value="C:nucleus"/>
    <property type="evidence" value="ECO:0007669"/>
    <property type="project" value="UniProtKB-SubCell"/>
</dbReference>
<dbReference type="GO" id="GO:0046872">
    <property type="term" value="F:metal ion binding"/>
    <property type="evidence" value="ECO:0007669"/>
    <property type="project" value="UniProtKB-KW"/>
</dbReference>
<dbReference type="GO" id="GO:0140678">
    <property type="term" value="F:molecular function inhibitor activity"/>
    <property type="evidence" value="ECO:0000250"/>
    <property type="project" value="UniProtKB"/>
</dbReference>
<dbReference type="GO" id="GO:0005102">
    <property type="term" value="F:signaling receptor binding"/>
    <property type="evidence" value="ECO:0000318"/>
    <property type="project" value="GO_Central"/>
</dbReference>
<dbReference type="GO" id="GO:0006915">
    <property type="term" value="P:apoptotic process"/>
    <property type="evidence" value="ECO:0007669"/>
    <property type="project" value="UniProtKB-KW"/>
</dbReference>
<dbReference type="GO" id="GO:0031397">
    <property type="term" value="P:negative regulation of protein ubiquitination"/>
    <property type="evidence" value="ECO:0000250"/>
    <property type="project" value="UniProtKB"/>
</dbReference>
<dbReference type="GO" id="GO:0007165">
    <property type="term" value="P:signal transduction"/>
    <property type="evidence" value="ECO:0000318"/>
    <property type="project" value="GO_Central"/>
</dbReference>
<dbReference type="InterPro" id="IPR007623">
    <property type="entry name" value="BEX"/>
</dbReference>
<dbReference type="InterPro" id="IPR021156">
    <property type="entry name" value="TF_A-like/BEX"/>
</dbReference>
<dbReference type="PANTHER" id="PTHR19430">
    <property type="entry name" value="PROTEIN BEX1-RELATED"/>
    <property type="match status" value="1"/>
</dbReference>
<dbReference type="PANTHER" id="PTHR19430:SF1">
    <property type="entry name" value="PROTEIN BEX3"/>
    <property type="match status" value="1"/>
</dbReference>
<dbReference type="Pfam" id="PF04538">
    <property type="entry name" value="BEX"/>
    <property type="match status" value="1"/>
</dbReference>
<dbReference type="PIRSF" id="PIRSF008633">
    <property type="entry name" value="BEX"/>
    <property type="match status" value="1"/>
</dbReference>
<feature type="chain" id="PRO_0000229780" description="Protein BEX3">
    <location>
        <begin position="1"/>
        <end position="112"/>
    </location>
</feature>
<feature type="region of interest" description="Disordered" evidence="3">
    <location>
        <begin position="1"/>
        <end position="45"/>
    </location>
</feature>
<feature type="region of interest" description="Interaction with 14-3-3 epsilon" evidence="2">
    <location>
        <begin position="69"/>
        <end position="112"/>
    </location>
</feature>
<feature type="region of interest" description="Interaction with p75NTR/NGFR" evidence="2">
    <location>
        <begin position="69"/>
        <end position="94"/>
    </location>
</feature>
<feature type="region of interest" description="His cluster" evidence="2">
    <location>
        <begin position="101"/>
        <end position="105"/>
    </location>
</feature>
<feature type="short sequence motif" description="Nuclear export signal" evidence="2">
    <location>
        <begin position="78"/>
        <end position="88"/>
    </location>
</feature>
<feature type="binding site" evidence="2">
    <location>
        <position position="109"/>
    </location>
    <ligand>
        <name>Zn(2+)</name>
        <dbReference type="ChEBI" id="CHEBI:29105"/>
        <note>ligand shared with FEM1B</note>
    </ligand>
</feature>